<gene>
    <name evidence="1" type="primary">rpl3</name>
    <name type="ordered locus">PH1777</name>
    <name type="ORF">PHLG003</name>
</gene>
<name>RL3_PYRHO</name>
<evidence type="ECO:0000255" key="1">
    <source>
        <dbReference type="HAMAP-Rule" id="MF_01325"/>
    </source>
</evidence>
<evidence type="ECO:0000256" key="2">
    <source>
        <dbReference type="SAM" id="MobiDB-lite"/>
    </source>
</evidence>
<evidence type="ECO:0000305" key="3"/>
<keyword id="KW-0687">Ribonucleoprotein</keyword>
<keyword id="KW-0689">Ribosomal protein</keyword>
<keyword id="KW-0694">RNA-binding</keyword>
<keyword id="KW-0699">rRNA-binding</keyword>
<accession>O59418</accession>
<feature type="chain" id="PRO_0000077219" description="Large ribosomal subunit protein uL3">
    <location>
        <begin position="1"/>
        <end position="362"/>
    </location>
</feature>
<feature type="region of interest" description="Disordered" evidence="2">
    <location>
        <begin position="340"/>
        <end position="362"/>
    </location>
</feature>
<feature type="compositionally biased region" description="Polar residues" evidence="2">
    <location>
        <begin position="351"/>
        <end position="362"/>
    </location>
</feature>
<comment type="function">
    <text evidence="1">One of the primary rRNA binding proteins, it binds directly near the 3'-end of the 23S rRNA, where it nucleates assembly of the 50S subunit.</text>
</comment>
<comment type="subunit">
    <text evidence="1">Part of the 50S ribosomal subunit. Forms a cluster with proteins L14 and L24e.</text>
</comment>
<comment type="similarity">
    <text evidence="1">Belongs to the universal ribosomal protein uL3 family.</text>
</comment>
<protein>
    <recommendedName>
        <fullName evidence="1">Large ribosomal subunit protein uL3</fullName>
    </recommendedName>
    <alternativeName>
        <fullName evidence="3">50S ribosomal protein L3</fullName>
    </alternativeName>
</protein>
<organism>
    <name type="scientific">Pyrococcus horikoshii (strain ATCC 700860 / DSM 12428 / JCM 9974 / NBRC 100139 / OT-3)</name>
    <dbReference type="NCBI Taxonomy" id="70601"/>
    <lineage>
        <taxon>Archaea</taxon>
        <taxon>Methanobacteriati</taxon>
        <taxon>Methanobacteriota</taxon>
        <taxon>Thermococci</taxon>
        <taxon>Thermococcales</taxon>
        <taxon>Thermococcaceae</taxon>
        <taxon>Pyrococcus</taxon>
    </lineage>
</organism>
<dbReference type="EMBL" id="BA000001">
    <property type="protein sequence ID" value="BAA30895.1"/>
    <property type="molecule type" value="Genomic_DNA"/>
</dbReference>
<dbReference type="PIR" id="H71187">
    <property type="entry name" value="H71187"/>
</dbReference>
<dbReference type="RefSeq" id="WP_010885842.1">
    <property type="nucleotide sequence ID" value="NC_000961.1"/>
</dbReference>
<dbReference type="SMR" id="O59418"/>
<dbReference type="STRING" id="70601.gene:9378778"/>
<dbReference type="EnsemblBacteria" id="BAA30895">
    <property type="protein sequence ID" value="BAA30895"/>
    <property type="gene ID" value="BAA30895"/>
</dbReference>
<dbReference type="GeneID" id="1442624"/>
<dbReference type="KEGG" id="pho:PH1777"/>
<dbReference type="eggNOG" id="arCOG04070">
    <property type="taxonomic scope" value="Archaea"/>
</dbReference>
<dbReference type="OrthoDB" id="6121at2157"/>
<dbReference type="Proteomes" id="UP000000752">
    <property type="component" value="Chromosome"/>
</dbReference>
<dbReference type="GO" id="GO:0022625">
    <property type="term" value="C:cytosolic large ribosomal subunit"/>
    <property type="evidence" value="ECO:0007669"/>
    <property type="project" value="TreeGrafter"/>
</dbReference>
<dbReference type="GO" id="GO:0019843">
    <property type="term" value="F:rRNA binding"/>
    <property type="evidence" value="ECO:0007669"/>
    <property type="project" value="UniProtKB-UniRule"/>
</dbReference>
<dbReference type="GO" id="GO:0003735">
    <property type="term" value="F:structural constituent of ribosome"/>
    <property type="evidence" value="ECO:0007669"/>
    <property type="project" value="InterPro"/>
</dbReference>
<dbReference type="GO" id="GO:0006412">
    <property type="term" value="P:translation"/>
    <property type="evidence" value="ECO:0007669"/>
    <property type="project" value="UniProtKB-UniRule"/>
</dbReference>
<dbReference type="Gene3D" id="3.30.1430.10">
    <property type="match status" value="1"/>
</dbReference>
<dbReference type="Gene3D" id="4.10.960.10">
    <property type="entry name" value="Ribosomal protein L3, domain 3"/>
    <property type="match status" value="1"/>
</dbReference>
<dbReference type="Gene3D" id="2.40.30.10">
    <property type="entry name" value="Translation factors"/>
    <property type="match status" value="1"/>
</dbReference>
<dbReference type="HAMAP" id="MF_01325_A">
    <property type="entry name" value="Ribosomal_uL3_A"/>
    <property type="match status" value="1"/>
</dbReference>
<dbReference type="InterPro" id="IPR045077">
    <property type="entry name" value="L3_arc_euk"/>
</dbReference>
<dbReference type="InterPro" id="IPR044892">
    <property type="entry name" value="Ribosomal_L3_dom_3_arc_sf"/>
</dbReference>
<dbReference type="InterPro" id="IPR000597">
    <property type="entry name" value="Ribosomal_uL3"/>
</dbReference>
<dbReference type="InterPro" id="IPR019928">
    <property type="entry name" value="Ribosomal_uL3_arc"/>
</dbReference>
<dbReference type="InterPro" id="IPR019926">
    <property type="entry name" value="Ribosomal_uL3_CS"/>
</dbReference>
<dbReference type="InterPro" id="IPR009000">
    <property type="entry name" value="Transl_B-barrel_sf"/>
</dbReference>
<dbReference type="NCBIfam" id="TIGR03626">
    <property type="entry name" value="L3_arch"/>
    <property type="match status" value="1"/>
</dbReference>
<dbReference type="NCBIfam" id="NF003261">
    <property type="entry name" value="PRK04231.1"/>
    <property type="match status" value="1"/>
</dbReference>
<dbReference type="PANTHER" id="PTHR11363">
    <property type="entry name" value="60S RIBOSOMAL PROTEIN L3-RELATED"/>
    <property type="match status" value="1"/>
</dbReference>
<dbReference type="PANTHER" id="PTHR11363:SF5">
    <property type="entry name" value="LARGE RIBOSOMAL SUBUNIT PROTEIN UL3"/>
    <property type="match status" value="1"/>
</dbReference>
<dbReference type="Pfam" id="PF00297">
    <property type="entry name" value="Ribosomal_L3"/>
    <property type="match status" value="1"/>
</dbReference>
<dbReference type="SUPFAM" id="SSF50447">
    <property type="entry name" value="Translation proteins"/>
    <property type="match status" value="1"/>
</dbReference>
<dbReference type="PROSITE" id="PS00474">
    <property type="entry name" value="RIBOSOMAL_L3"/>
    <property type="match status" value="1"/>
</dbReference>
<reference key="1">
    <citation type="journal article" date="1998" name="DNA Res.">
        <title>Complete sequence and gene organization of the genome of a hyper-thermophilic archaebacterium, Pyrococcus horikoshii OT3.</title>
        <authorList>
            <person name="Kawarabayasi Y."/>
            <person name="Sawada M."/>
            <person name="Horikawa H."/>
            <person name="Haikawa Y."/>
            <person name="Hino Y."/>
            <person name="Yamamoto S."/>
            <person name="Sekine M."/>
            <person name="Baba S."/>
            <person name="Kosugi H."/>
            <person name="Hosoyama A."/>
            <person name="Nagai Y."/>
            <person name="Sakai M."/>
            <person name="Ogura K."/>
            <person name="Otsuka R."/>
            <person name="Nakazawa H."/>
            <person name="Takamiya M."/>
            <person name="Ohfuku Y."/>
            <person name="Funahashi T."/>
            <person name="Tanaka T."/>
            <person name="Kudoh Y."/>
            <person name="Yamazaki J."/>
            <person name="Kushida N."/>
            <person name="Oguchi A."/>
            <person name="Aoki K."/>
            <person name="Yoshizawa T."/>
            <person name="Nakamura Y."/>
            <person name="Robb F.T."/>
            <person name="Horikoshi K."/>
            <person name="Masuchi Y."/>
            <person name="Shizuya H."/>
            <person name="Kikuchi H."/>
        </authorList>
    </citation>
    <scope>NUCLEOTIDE SEQUENCE [LARGE SCALE GENOMIC DNA]</scope>
    <source>
        <strain>ATCC 700860 / DSM 12428 / JCM 9974 / NBRC 100139 / OT-3</strain>
    </source>
</reference>
<sequence>MGKIHRPRKGSLAFSPRKRAKSIVPRIRSWPKETEVRMLGFAGYKAGMTHILMIDDEPGLTNGKEIFMPVTIIETPPLRVFGIRAYRQGYLGLETAGEVIVPDFELDNYTPSKKGKGRKFTFYQFLGRRIATLPKDYTQEEFEQKLGALEDMIKEGEIVEVRALVSTQPWVIKLKKKPEVMEYAIGGTSVEEKFNYIKEKLGKEIRVGEVLKEGELLDVIAVTKGKGTQGPVKRWGIKLRAHKDSKGRRKVGSIGPWHPARVMWTVPMAGQMGFHHRTELNKRLIAIGENGKLVIDGNEIEITPKGGFPHYGIVRGDFMMIAGSVPGAIKRIIRVRPAIRPPKKKPPVQRPQITYVSVESKQ</sequence>
<proteinExistence type="inferred from homology"/>